<reference key="1">
    <citation type="journal article" date="2006" name="J. Bacteriol.">
        <title>The genome sequence of the obligately chemolithoautotrophic, facultatively anaerobic bacterium Thiobacillus denitrificans.</title>
        <authorList>
            <person name="Beller H.R."/>
            <person name="Chain P.S."/>
            <person name="Letain T.E."/>
            <person name="Chakicherla A."/>
            <person name="Larimer F.W."/>
            <person name="Richardson P.M."/>
            <person name="Coleman M.A."/>
            <person name="Wood A.P."/>
            <person name="Kelly D.P."/>
        </authorList>
    </citation>
    <scope>NUCLEOTIDE SEQUENCE [LARGE SCALE GENOMIC DNA]</scope>
    <source>
        <strain>ATCC 25259 / T1</strain>
    </source>
</reference>
<gene>
    <name evidence="2" type="primary">infB</name>
    <name type="ordered locus">Tbd_0697</name>
</gene>
<organism>
    <name type="scientific">Thiobacillus denitrificans (strain ATCC 25259 / T1)</name>
    <dbReference type="NCBI Taxonomy" id="292415"/>
    <lineage>
        <taxon>Bacteria</taxon>
        <taxon>Pseudomonadati</taxon>
        <taxon>Pseudomonadota</taxon>
        <taxon>Betaproteobacteria</taxon>
        <taxon>Nitrosomonadales</taxon>
        <taxon>Thiobacillaceae</taxon>
        <taxon>Thiobacillus</taxon>
    </lineage>
</organism>
<comment type="function">
    <text evidence="2">One of the essential components for the initiation of protein synthesis. Protects formylmethionyl-tRNA from spontaneous hydrolysis and promotes its binding to the 30S ribosomal subunits. Also involved in the hydrolysis of GTP during the formation of the 70S ribosomal complex.</text>
</comment>
<comment type="subcellular location">
    <subcellularLocation>
        <location evidence="2">Cytoplasm</location>
    </subcellularLocation>
</comment>
<comment type="similarity">
    <text evidence="2">Belongs to the TRAFAC class translation factor GTPase superfamily. Classic translation factor GTPase family. IF-2 subfamily.</text>
</comment>
<feature type="chain" id="PRO_0000228256" description="Translation initiation factor IF-2">
    <location>
        <begin position="1"/>
        <end position="922"/>
    </location>
</feature>
<feature type="domain" description="tr-type G">
    <location>
        <begin position="422"/>
        <end position="589"/>
    </location>
</feature>
<feature type="region of interest" description="Disordered" evidence="3">
    <location>
        <begin position="243"/>
        <end position="329"/>
    </location>
</feature>
<feature type="region of interest" description="G1" evidence="1">
    <location>
        <begin position="431"/>
        <end position="438"/>
    </location>
</feature>
<feature type="region of interest" description="G2" evidence="1">
    <location>
        <begin position="456"/>
        <end position="460"/>
    </location>
</feature>
<feature type="region of interest" description="G3" evidence="1">
    <location>
        <begin position="477"/>
        <end position="480"/>
    </location>
</feature>
<feature type="region of interest" description="G4" evidence="1">
    <location>
        <begin position="531"/>
        <end position="534"/>
    </location>
</feature>
<feature type="region of interest" description="G5" evidence="1">
    <location>
        <begin position="567"/>
        <end position="569"/>
    </location>
</feature>
<feature type="compositionally biased region" description="Low complexity" evidence="3">
    <location>
        <begin position="250"/>
        <end position="264"/>
    </location>
</feature>
<feature type="compositionally biased region" description="Basic and acidic residues" evidence="3">
    <location>
        <begin position="267"/>
        <end position="298"/>
    </location>
</feature>
<feature type="binding site" evidence="2">
    <location>
        <begin position="431"/>
        <end position="438"/>
    </location>
    <ligand>
        <name>GTP</name>
        <dbReference type="ChEBI" id="CHEBI:37565"/>
    </ligand>
</feature>
<feature type="binding site" evidence="2">
    <location>
        <begin position="477"/>
        <end position="481"/>
    </location>
    <ligand>
        <name>GTP</name>
        <dbReference type="ChEBI" id="CHEBI:37565"/>
    </ligand>
</feature>
<feature type="binding site" evidence="2">
    <location>
        <begin position="531"/>
        <end position="534"/>
    </location>
    <ligand>
        <name>GTP</name>
        <dbReference type="ChEBI" id="CHEBI:37565"/>
    </ligand>
</feature>
<accession>Q3SKX1</accession>
<keyword id="KW-0963">Cytoplasm</keyword>
<keyword id="KW-0342">GTP-binding</keyword>
<keyword id="KW-0396">Initiation factor</keyword>
<keyword id="KW-0547">Nucleotide-binding</keyword>
<keyword id="KW-0648">Protein biosynthesis</keyword>
<keyword id="KW-1185">Reference proteome</keyword>
<evidence type="ECO:0000250" key="1"/>
<evidence type="ECO:0000255" key="2">
    <source>
        <dbReference type="HAMAP-Rule" id="MF_00100"/>
    </source>
</evidence>
<evidence type="ECO:0000256" key="3">
    <source>
        <dbReference type="SAM" id="MobiDB-lite"/>
    </source>
</evidence>
<name>IF2_THIDA</name>
<dbReference type="EMBL" id="CP000116">
    <property type="protein sequence ID" value="AAZ96650.1"/>
    <property type="molecule type" value="Genomic_DNA"/>
</dbReference>
<dbReference type="RefSeq" id="WP_011311209.1">
    <property type="nucleotide sequence ID" value="NC_007404.1"/>
</dbReference>
<dbReference type="SMR" id="Q3SKX1"/>
<dbReference type="STRING" id="292415.Tbd_0697"/>
<dbReference type="KEGG" id="tbd:Tbd_0697"/>
<dbReference type="eggNOG" id="COG0532">
    <property type="taxonomic scope" value="Bacteria"/>
</dbReference>
<dbReference type="eggNOG" id="COG3064">
    <property type="taxonomic scope" value="Bacteria"/>
</dbReference>
<dbReference type="HOGENOM" id="CLU_006301_6_0_4"/>
<dbReference type="OrthoDB" id="9811804at2"/>
<dbReference type="Proteomes" id="UP000008291">
    <property type="component" value="Chromosome"/>
</dbReference>
<dbReference type="GO" id="GO:0005829">
    <property type="term" value="C:cytosol"/>
    <property type="evidence" value="ECO:0007669"/>
    <property type="project" value="TreeGrafter"/>
</dbReference>
<dbReference type="GO" id="GO:0005525">
    <property type="term" value="F:GTP binding"/>
    <property type="evidence" value="ECO:0007669"/>
    <property type="project" value="UniProtKB-KW"/>
</dbReference>
<dbReference type="GO" id="GO:0003924">
    <property type="term" value="F:GTPase activity"/>
    <property type="evidence" value="ECO:0007669"/>
    <property type="project" value="UniProtKB-UniRule"/>
</dbReference>
<dbReference type="GO" id="GO:0097216">
    <property type="term" value="F:guanosine tetraphosphate binding"/>
    <property type="evidence" value="ECO:0007669"/>
    <property type="project" value="UniProtKB-ARBA"/>
</dbReference>
<dbReference type="GO" id="GO:0003743">
    <property type="term" value="F:translation initiation factor activity"/>
    <property type="evidence" value="ECO:0007669"/>
    <property type="project" value="UniProtKB-UniRule"/>
</dbReference>
<dbReference type="CDD" id="cd01887">
    <property type="entry name" value="IF2_eIF5B"/>
    <property type="match status" value="1"/>
</dbReference>
<dbReference type="CDD" id="cd03702">
    <property type="entry name" value="IF2_mtIF2_II"/>
    <property type="match status" value="1"/>
</dbReference>
<dbReference type="CDD" id="cd03692">
    <property type="entry name" value="mtIF2_IVc"/>
    <property type="match status" value="1"/>
</dbReference>
<dbReference type="FunFam" id="2.40.30.10:FF:000007">
    <property type="entry name" value="Translation initiation factor IF-2"/>
    <property type="match status" value="1"/>
</dbReference>
<dbReference type="FunFam" id="2.40.30.10:FF:000008">
    <property type="entry name" value="Translation initiation factor IF-2"/>
    <property type="match status" value="1"/>
</dbReference>
<dbReference type="FunFam" id="3.40.50.10050:FF:000001">
    <property type="entry name" value="Translation initiation factor IF-2"/>
    <property type="match status" value="1"/>
</dbReference>
<dbReference type="FunFam" id="3.40.50.300:FF:000019">
    <property type="entry name" value="Translation initiation factor IF-2"/>
    <property type="match status" value="1"/>
</dbReference>
<dbReference type="Gene3D" id="3.40.50.300">
    <property type="entry name" value="P-loop containing nucleotide triphosphate hydrolases"/>
    <property type="match status" value="1"/>
</dbReference>
<dbReference type="Gene3D" id="3.30.56.50">
    <property type="entry name" value="Putative DNA-binding domain, N-terminal subdomain of bacterial translation initiation factor IF2"/>
    <property type="match status" value="1"/>
</dbReference>
<dbReference type="Gene3D" id="2.40.30.10">
    <property type="entry name" value="Translation factors"/>
    <property type="match status" value="2"/>
</dbReference>
<dbReference type="Gene3D" id="3.40.50.10050">
    <property type="entry name" value="Translation initiation factor IF- 2, domain 3"/>
    <property type="match status" value="1"/>
</dbReference>
<dbReference type="HAMAP" id="MF_00100_B">
    <property type="entry name" value="IF_2_B"/>
    <property type="match status" value="1"/>
</dbReference>
<dbReference type="InterPro" id="IPR009061">
    <property type="entry name" value="DNA-bd_dom_put_sf"/>
</dbReference>
<dbReference type="InterPro" id="IPR053905">
    <property type="entry name" value="EF-G-like_DII"/>
</dbReference>
<dbReference type="InterPro" id="IPR004161">
    <property type="entry name" value="EFTu-like_2"/>
</dbReference>
<dbReference type="InterPro" id="IPR013575">
    <property type="entry name" value="IF2_assoc_dom_bac"/>
</dbReference>
<dbReference type="InterPro" id="IPR044145">
    <property type="entry name" value="IF2_II"/>
</dbReference>
<dbReference type="InterPro" id="IPR006847">
    <property type="entry name" value="IF2_N"/>
</dbReference>
<dbReference type="InterPro" id="IPR027417">
    <property type="entry name" value="P-loop_NTPase"/>
</dbReference>
<dbReference type="InterPro" id="IPR005225">
    <property type="entry name" value="Small_GTP-bd"/>
</dbReference>
<dbReference type="InterPro" id="IPR000795">
    <property type="entry name" value="T_Tr_GTP-bd_dom"/>
</dbReference>
<dbReference type="InterPro" id="IPR000178">
    <property type="entry name" value="TF_IF2_bacterial-like"/>
</dbReference>
<dbReference type="InterPro" id="IPR015760">
    <property type="entry name" value="TIF_IF2"/>
</dbReference>
<dbReference type="InterPro" id="IPR023115">
    <property type="entry name" value="TIF_IF2_dom3"/>
</dbReference>
<dbReference type="InterPro" id="IPR036925">
    <property type="entry name" value="TIF_IF2_dom3_sf"/>
</dbReference>
<dbReference type="InterPro" id="IPR009000">
    <property type="entry name" value="Transl_B-barrel_sf"/>
</dbReference>
<dbReference type="NCBIfam" id="TIGR00487">
    <property type="entry name" value="IF-2"/>
    <property type="match status" value="1"/>
</dbReference>
<dbReference type="NCBIfam" id="TIGR00231">
    <property type="entry name" value="small_GTP"/>
    <property type="match status" value="1"/>
</dbReference>
<dbReference type="PANTHER" id="PTHR43381:SF5">
    <property type="entry name" value="TR-TYPE G DOMAIN-CONTAINING PROTEIN"/>
    <property type="match status" value="1"/>
</dbReference>
<dbReference type="PANTHER" id="PTHR43381">
    <property type="entry name" value="TRANSLATION INITIATION FACTOR IF-2-RELATED"/>
    <property type="match status" value="1"/>
</dbReference>
<dbReference type="Pfam" id="PF22042">
    <property type="entry name" value="EF-G_D2"/>
    <property type="match status" value="1"/>
</dbReference>
<dbReference type="Pfam" id="PF00009">
    <property type="entry name" value="GTP_EFTU"/>
    <property type="match status" value="1"/>
</dbReference>
<dbReference type="Pfam" id="PF03144">
    <property type="entry name" value="GTP_EFTU_D2"/>
    <property type="match status" value="1"/>
</dbReference>
<dbReference type="Pfam" id="PF11987">
    <property type="entry name" value="IF-2"/>
    <property type="match status" value="1"/>
</dbReference>
<dbReference type="Pfam" id="PF08364">
    <property type="entry name" value="IF2_assoc"/>
    <property type="match status" value="1"/>
</dbReference>
<dbReference type="Pfam" id="PF04760">
    <property type="entry name" value="IF2_N"/>
    <property type="match status" value="1"/>
</dbReference>
<dbReference type="PRINTS" id="PR00449">
    <property type="entry name" value="RASTRNSFRMNG"/>
</dbReference>
<dbReference type="SUPFAM" id="SSF52156">
    <property type="entry name" value="Initiation factor IF2/eIF5b, domain 3"/>
    <property type="match status" value="1"/>
</dbReference>
<dbReference type="SUPFAM" id="SSF52540">
    <property type="entry name" value="P-loop containing nucleoside triphosphate hydrolases"/>
    <property type="match status" value="1"/>
</dbReference>
<dbReference type="SUPFAM" id="SSF46955">
    <property type="entry name" value="Putative DNA-binding domain"/>
    <property type="match status" value="1"/>
</dbReference>
<dbReference type="SUPFAM" id="SSF50447">
    <property type="entry name" value="Translation proteins"/>
    <property type="match status" value="2"/>
</dbReference>
<dbReference type="PROSITE" id="PS51722">
    <property type="entry name" value="G_TR_2"/>
    <property type="match status" value="1"/>
</dbReference>
<dbReference type="PROSITE" id="PS01176">
    <property type="entry name" value="IF2"/>
    <property type="match status" value="1"/>
</dbReference>
<proteinExistence type="inferred from homology"/>
<sequence length="922" mass="97801">MNVEQFAQELKLPPQLLLEQLKAAGVSKNDVVDPVTEADKAHLLDYLRKMHGGGGGETGKTKITITRKQTGEIRKTDSTGKSRTIQVEVRKSRTYVKRDPAALAAEALAAAEPAAAAPAAPPPALEEVPAEPAPIEAQAPVAETPAAEPAVVEAPAPEPAVTAEVTAPAPVEAAPEPAPAAKPEGEAAPVKKTTRIKKASILNEAEVKAREDEARRHQALLERQAADAKARIEREALRKQAEAAREAAKLAEAQKAAAPAPAAPTEKTLHKPDKPAAAKGAKGPDKKPAGAWKDDAARRRGGLKTRGGAAPDAGWRGRKGKSKSGQEETTFVAPTEPIVREVLVPETITVAELAHKMSVKAAEVIKALMKLGSMVTINQVLDQETAIIVVEEMGHIGKPAALDTPEAFLIETGEPGEAEMVARPPVVTVMGHVDHGKTSLLDTIRRTRVASGEAGGITQHIGAYHVETEKGVITFLDTPGHEAFTAMRARGAKATDIVVLVVAADDGVMPQTIEAIHHAKAAGVPLVVAVNKIDKPDANPERIRQELVAQGVTPEEWGGDTQFVEVSAKANTNINGLLDAILLQAEVLELQAPADGPAKGIVIEARLDKGKGPVATLLVQSGTLRRGDMVLAGQVYGRVRAMLDEAGKTVTEAGPSIPVEIQGLSDVPQAGEDMMVLPDERKAREIALFRQGKYRDVQLAKKQAAKLESMFDQMGQGEVQHLPIILKADMQGSYEGLAHALGKISTDEVKVNIIHSGVGAITESDVNLALASKAVLIGFNVRADASARKLAESSGVDIRYYNIIYEAVDEVKAALSGMLAPEKKESVIGTVEVRQVFVISKVGTIAGCYVTDGVVKRGAGVRLIRNNVVIHQGELDSLKRFKDDVKEVKANFECGLSLKNFNDIQEGDILEVFEVVEVARSL</sequence>
<protein>
    <recommendedName>
        <fullName evidence="2">Translation initiation factor IF-2</fullName>
    </recommendedName>
</protein>